<name>GLNA2_STRVR</name>
<sequence>MTFKAEYIWIDGTEPTAKLRSKTKIITGQPAGLDALPIWGFDGSSTNQAEGHSSDCVLKPVFTCPDPIRGGDDILVLCEVLNIDLTPHASNTRAALAEVAERFAAQEPIFGIEQEYTFFQDGYPLGFPKGGFPAPQGGYYCGVGADEIFGRDVVEAHLDNCLKAGLAISGINAEVMPGQWEFQVGPVSPLEVSDHLWVARWLLYRTAEDFDVAATLDPKPVKGDWNGAGAHTNFSTKAMRESYDAIITAAESLGEGSKPLDHVKNYGAGIDDRLTGLHETAPWNEYSYGVSDRGASVRIPWQVEKDGKGYIEDRRPNANVDPYVVTRLLVDTCCSALEKAGQV</sequence>
<keyword id="KW-0067">ATP-binding</keyword>
<keyword id="KW-0963">Cytoplasm</keyword>
<keyword id="KW-0436">Ligase</keyword>
<keyword id="KW-0460">Magnesium</keyword>
<keyword id="KW-0479">Metal-binding</keyword>
<keyword id="KW-0547">Nucleotide-binding</keyword>
<proteinExistence type="inferred from homology"/>
<dbReference type="EC" id="6.3.1.2" evidence="3"/>
<dbReference type="EMBL" id="X52842">
    <property type="protein sequence ID" value="CAA37028.1"/>
    <property type="molecule type" value="Genomic_DNA"/>
</dbReference>
<dbReference type="PIR" id="C36724">
    <property type="entry name" value="AJSM2V"/>
</dbReference>
<dbReference type="SMR" id="P19432"/>
<dbReference type="GO" id="GO:0005737">
    <property type="term" value="C:cytoplasm"/>
    <property type="evidence" value="ECO:0007669"/>
    <property type="project" value="UniProtKB-SubCell"/>
</dbReference>
<dbReference type="GO" id="GO:0005524">
    <property type="term" value="F:ATP binding"/>
    <property type="evidence" value="ECO:0007669"/>
    <property type="project" value="UniProtKB-KW"/>
</dbReference>
<dbReference type="GO" id="GO:0004356">
    <property type="term" value="F:glutamine synthetase activity"/>
    <property type="evidence" value="ECO:0007669"/>
    <property type="project" value="UniProtKB-EC"/>
</dbReference>
<dbReference type="GO" id="GO:0046872">
    <property type="term" value="F:metal ion binding"/>
    <property type="evidence" value="ECO:0007669"/>
    <property type="project" value="UniProtKB-KW"/>
</dbReference>
<dbReference type="GO" id="GO:0006542">
    <property type="term" value="P:glutamine biosynthetic process"/>
    <property type="evidence" value="ECO:0007669"/>
    <property type="project" value="InterPro"/>
</dbReference>
<dbReference type="FunFam" id="3.30.590.10:FF:000004">
    <property type="entry name" value="Glutamine synthetase"/>
    <property type="match status" value="1"/>
</dbReference>
<dbReference type="Gene3D" id="3.10.20.70">
    <property type="entry name" value="Glutamine synthetase, N-terminal domain"/>
    <property type="match status" value="1"/>
</dbReference>
<dbReference type="Gene3D" id="3.30.590.10">
    <property type="entry name" value="Glutamine synthetase/guanido kinase, catalytic domain"/>
    <property type="match status" value="1"/>
</dbReference>
<dbReference type="InterPro" id="IPR048091">
    <property type="entry name" value="Gln_syn_GlnII"/>
</dbReference>
<dbReference type="InterPro" id="IPR008147">
    <property type="entry name" value="Gln_synt_N"/>
</dbReference>
<dbReference type="InterPro" id="IPR036651">
    <property type="entry name" value="Gln_synt_N_sf"/>
</dbReference>
<dbReference type="InterPro" id="IPR014746">
    <property type="entry name" value="Gln_synth/guanido_kin_cat_dom"/>
</dbReference>
<dbReference type="InterPro" id="IPR008146">
    <property type="entry name" value="Gln_synth_cat_dom"/>
</dbReference>
<dbReference type="InterPro" id="IPR027303">
    <property type="entry name" value="Gln_synth_gly_rich_site"/>
</dbReference>
<dbReference type="InterPro" id="IPR027302">
    <property type="entry name" value="Gln_synth_N_conserv_site"/>
</dbReference>
<dbReference type="InterPro" id="IPR050292">
    <property type="entry name" value="Glutamine_Synthetase"/>
</dbReference>
<dbReference type="NCBIfam" id="NF041605">
    <property type="entry name" value="gln_syn_GlnII"/>
    <property type="match status" value="1"/>
</dbReference>
<dbReference type="PANTHER" id="PTHR20852">
    <property type="entry name" value="GLUTAMINE SYNTHETASE"/>
    <property type="match status" value="1"/>
</dbReference>
<dbReference type="PANTHER" id="PTHR20852:SF57">
    <property type="entry name" value="GLUTAMINE SYNTHETASE 2 CYTOPLASMIC"/>
    <property type="match status" value="1"/>
</dbReference>
<dbReference type="Pfam" id="PF00120">
    <property type="entry name" value="Gln-synt_C"/>
    <property type="match status" value="1"/>
</dbReference>
<dbReference type="Pfam" id="PF03951">
    <property type="entry name" value="Gln-synt_N"/>
    <property type="match status" value="1"/>
</dbReference>
<dbReference type="SMART" id="SM01230">
    <property type="entry name" value="Gln-synt_C"/>
    <property type="match status" value="1"/>
</dbReference>
<dbReference type="SUPFAM" id="SSF54368">
    <property type="entry name" value="Glutamine synthetase, N-terminal domain"/>
    <property type="match status" value="1"/>
</dbReference>
<dbReference type="SUPFAM" id="SSF55931">
    <property type="entry name" value="Glutamine synthetase/guanido kinase"/>
    <property type="match status" value="1"/>
</dbReference>
<dbReference type="PROSITE" id="PS00180">
    <property type="entry name" value="GLNA_1"/>
    <property type="match status" value="1"/>
</dbReference>
<dbReference type="PROSITE" id="PS00181">
    <property type="entry name" value="GLNA_ATP"/>
    <property type="match status" value="1"/>
</dbReference>
<dbReference type="PROSITE" id="PS51986">
    <property type="entry name" value="GS_BETA_GRASP"/>
    <property type="match status" value="1"/>
</dbReference>
<dbReference type="PROSITE" id="PS51987">
    <property type="entry name" value="GS_CATALYTIC"/>
    <property type="match status" value="1"/>
</dbReference>
<organism>
    <name type="scientific">Streptomyces viridochromogenes</name>
    <dbReference type="NCBI Taxonomy" id="1938"/>
    <lineage>
        <taxon>Bacteria</taxon>
        <taxon>Bacillati</taxon>
        <taxon>Actinomycetota</taxon>
        <taxon>Actinomycetes</taxon>
        <taxon>Kitasatosporales</taxon>
        <taxon>Streptomycetaceae</taxon>
        <taxon>Streptomyces</taxon>
    </lineage>
</organism>
<evidence type="ECO:0000250" key="1">
    <source>
        <dbReference type="UniProtKB" id="P0A1P6"/>
    </source>
</evidence>
<evidence type="ECO:0000250" key="2">
    <source>
        <dbReference type="UniProtKB" id="P12425"/>
    </source>
</evidence>
<evidence type="ECO:0000250" key="3">
    <source>
        <dbReference type="UniProtKB" id="P16580"/>
    </source>
</evidence>
<evidence type="ECO:0000250" key="4">
    <source>
        <dbReference type="UniProtKB" id="Q02154"/>
    </source>
</evidence>
<evidence type="ECO:0000255" key="5">
    <source>
        <dbReference type="PROSITE-ProRule" id="PRU01330"/>
    </source>
</evidence>
<evidence type="ECO:0000255" key="6">
    <source>
        <dbReference type="PROSITE-ProRule" id="PRU01331"/>
    </source>
</evidence>
<evidence type="ECO:0000269" key="7">
    <source>
    </source>
</evidence>
<evidence type="ECO:0000303" key="8">
    <source>
    </source>
</evidence>
<evidence type="ECO:0000305" key="9"/>
<evidence type="ECO:0000305" key="10">
    <source>
    </source>
</evidence>
<comment type="function">
    <text evidence="4">Catalyzes the ATP-dependent biosynthesis of glutamine from glutamate and ammonia.</text>
</comment>
<comment type="catalytic activity">
    <reaction evidence="3">
        <text>L-glutamate + NH4(+) + ATP = L-glutamine + ADP + phosphate + H(+)</text>
        <dbReference type="Rhea" id="RHEA:16169"/>
        <dbReference type="ChEBI" id="CHEBI:15378"/>
        <dbReference type="ChEBI" id="CHEBI:28938"/>
        <dbReference type="ChEBI" id="CHEBI:29985"/>
        <dbReference type="ChEBI" id="CHEBI:30616"/>
        <dbReference type="ChEBI" id="CHEBI:43474"/>
        <dbReference type="ChEBI" id="CHEBI:58359"/>
        <dbReference type="ChEBI" id="CHEBI:456216"/>
        <dbReference type="EC" id="6.3.1.2"/>
    </reaction>
</comment>
<comment type="cofactor">
    <cofactor evidence="3">
        <name>Mg(2+)</name>
        <dbReference type="ChEBI" id="CHEBI:18420"/>
    </cofactor>
</comment>
<comment type="subunit">
    <text evidence="4">Homooctamer and homotetramer.</text>
</comment>
<comment type="subcellular location">
    <subcellularLocation>
        <location evidence="3">Cytoplasm</location>
    </subcellularLocation>
</comment>
<comment type="miscellaneous">
    <text evidence="7">Overexpression of Streptomyces viridochromogenes glutamine synthetase confers resistance against the antibiotic phosphinathricyl-alenyl-alanine.</text>
</comment>
<comment type="miscellaneous">
    <text evidence="10">Two forms of glutamine synthetase (GSI and GSII) can be found in this bacteria, GSI is a typical prokaryotic glutamine synthetase whereas GSII is similar to the eukaryotic enzyme.</text>
</comment>
<comment type="similarity">
    <text evidence="9">Belongs to the glutamine synthetase family.</text>
</comment>
<gene>
    <name evidence="8" type="primary">glnII</name>
</gene>
<accession>P19432</accession>
<protein>
    <recommendedName>
        <fullName evidence="8">Glutamine synthetase</fullName>
        <shortName evidence="8">GS</shortName>
        <ecNumber evidence="3">6.3.1.2</ecNumber>
    </recommendedName>
    <alternativeName>
        <fullName evidence="9">Glutamate--ammonia ligase</fullName>
    </alternativeName>
    <alternativeName>
        <fullName evidence="8">Glutamine synthetase II</fullName>
        <shortName evidence="8">GSII</shortName>
    </alternativeName>
</protein>
<reference key="1">
    <citation type="journal article" date="1990" name="J. Bacteriol.">
        <title>Overexpression of a Streptomyces viridochromogenes gene (glnII) encoding a glutamine synthetase similar to those of eucaryotes confers resistance against the antibiotic phosphinothricyl-alanyl-alanine.</title>
        <authorList>
            <person name="Behrmann I."/>
            <person name="Hillemann D."/>
            <person name="Puehler A."/>
            <person name="Strauch E."/>
            <person name="Wohlleben W."/>
        </authorList>
    </citation>
    <scope>NUCLEOTIDE SEQUENCE [GENOMIC DNA]</scope>
    <source>
        <strain>ES2</strain>
    </source>
</reference>
<feature type="chain" id="PRO_0000153270" description="Glutamine synthetase">
    <location>
        <begin position="1"/>
        <end position="343"/>
    </location>
</feature>
<feature type="domain" description="GS beta-grasp" evidence="5">
    <location>
        <begin position="3"/>
        <end position="87"/>
    </location>
</feature>
<feature type="domain" description="GS catalytic" evidence="6">
    <location>
        <begin position="92"/>
        <end position="343"/>
    </location>
</feature>
<feature type="binding site" evidence="2">
    <location>
        <position position="113"/>
    </location>
    <ligand>
        <name>Mg(2+)</name>
        <dbReference type="ChEBI" id="CHEBI:18420"/>
    </ligand>
</feature>
<feature type="binding site" evidence="2">
    <location>
        <position position="115"/>
    </location>
    <ligand>
        <name>Mg(2+)</name>
        <dbReference type="ChEBI" id="CHEBI:18420"/>
    </ligand>
</feature>
<feature type="binding site" evidence="2">
    <location>
        <position position="174"/>
    </location>
    <ligand>
        <name>Mg(2+)</name>
        <dbReference type="ChEBI" id="CHEBI:18420"/>
    </ligand>
</feature>
<feature type="binding site" evidence="2">
    <location>
        <position position="181"/>
    </location>
    <ligand>
        <name>Mg(2+)</name>
        <dbReference type="ChEBI" id="CHEBI:18420"/>
    </ligand>
</feature>
<feature type="binding site" evidence="1">
    <location>
        <position position="279"/>
    </location>
    <ligand>
        <name>L-glutamate</name>
        <dbReference type="ChEBI" id="CHEBI:29985"/>
    </ligand>
</feature>